<reference key="1">
    <citation type="journal article" date="2009" name="Proc. Natl. Acad. Sci. U.S.A.">
        <title>Biogeography of the Sulfolobus islandicus pan-genome.</title>
        <authorList>
            <person name="Reno M.L."/>
            <person name="Held N.L."/>
            <person name="Fields C.J."/>
            <person name="Burke P.V."/>
            <person name="Whitaker R.J."/>
        </authorList>
    </citation>
    <scope>NUCLEOTIDE SEQUENCE [LARGE SCALE GENOMIC DNA]</scope>
    <source>
        <strain>M.16.4 / Kamchatka #3</strain>
    </source>
</reference>
<protein>
    <recommendedName>
        <fullName evidence="1">DNA-binding protein M164_1799</fullName>
    </recommendedName>
</protein>
<dbReference type="EMBL" id="CP001402">
    <property type="protein sequence ID" value="ACR42402.1"/>
    <property type="molecule type" value="Genomic_DNA"/>
</dbReference>
<dbReference type="RefSeq" id="WP_012711729.1">
    <property type="nucleotide sequence ID" value="NC_012726.1"/>
</dbReference>
<dbReference type="SMR" id="C4KII8"/>
<dbReference type="KEGG" id="sid:M164_1799"/>
<dbReference type="HOGENOM" id="CLU_122978_3_0_2"/>
<dbReference type="Proteomes" id="UP000001479">
    <property type="component" value="Chromosome"/>
</dbReference>
<dbReference type="GO" id="GO:0005829">
    <property type="term" value="C:cytosol"/>
    <property type="evidence" value="ECO:0007669"/>
    <property type="project" value="TreeGrafter"/>
</dbReference>
<dbReference type="GO" id="GO:0003677">
    <property type="term" value="F:DNA binding"/>
    <property type="evidence" value="ECO:0007669"/>
    <property type="project" value="UniProtKB-UniRule"/>
</dbReference>
<dbReference type="FunFam" id="1.10.8.140:FF:000004">
    <property type="entry name" value="DNA-binding protein PAE3044"/>
    <property type="match status" value="1"/>
</dbReference>
<dbReference type="Gene3D" id="1.10.8.140">
    <property type="entry name" value="PDCD5-like"/>
    <property type="match status" value="1"/>
</dbReference>
<dbReference type="HAMAP" id="MF_00026">
    <property type="entry name" value="dsDNA_bind"/>
    <property type="match status" value="1"/>
</dbReference>
<dbReference type="InterPro" id="IPR022889">
    <property type="entry name" value="DNA_bind_arc"/>
</dbReference>
<dbReference type="InterPro" id="IPR002836">
    <property type="entry name" value="PDCD5-like"/>
</dbReference>
<dbReference type="InterPro" id="IPR036883">
    <property type="entry name" value="PDCD5-like_sf"/>
</dbReference>
<dbReference type="NCBIfam" id="NF003268">
    <property type="entry name" value="PRK04239.1"/>
    <property type="match status" value="1"/>
</dbReference>
<dbReference type="PANTHER" id="PTHR10840">
    <property type="entry name" value="PROGRAMMED CELL DEATH PROTEIN 5"/>
    <property type="match status" value="1"/>
</dbReference>
<dbReference type="PANTHER" id="PTHR10840:SF0">
    <property type="entry name" value="PROGRAMMED CELL DEATH PROTEIN 5"/>
    <property type="match status" value="1"/>
</dbReference>
<dbReference type="Pfam" id="PF01984">
    <property type="entry name" value="dsDNA_bind"/>
    <property type="match status" value="1"/>
</dbReference>
<dbReference type="PIRSF" id="PIRSF015730">
    <property type="entry name" value="TFAR19"/>
    <property type="match status" value="1"/>
</dbReference>
<dbReference type="SUPFAM" id="SSF46950">
    <property type="entry name" value="Double-stranded DNA-binding domain"/>
    <property type="match status" value="1"/>
</dbReference>
<comment type="similarity">
    <text evidence="1">Belongs to the PDCD5 family.</text>
</comment>
<proteinExistence type="inferred from homology"/>
<gene>
    <name type="ordered locus">M164_1799</name>
</gene>
<name>Y1799_SACI6</name>
<sequence>MSAPNSYDDEELEELLRRKAAQEQKRLEEERKRKAELESQKESILRVILTPEARQRLTNIKLVKPEFAESLENQLIALAQSGRIKVPLTDEELKQILEQISEQNRRDFKIQIRERGWK</sequence>
<evidence type="ECO:0000255" key="1">
    <source>
        <dbReference type="HAMAP-Rule" id="MF_00026"/>
    </source>
</evidence>
<accession>C4KII8</accession>
<organism>
    <name type="scientific">Saccharolobus islandicus (strain M.16.4 / Kamchatka #3)</name>
    <name type="common">Sulfolobus islandicus</name>
    <dbReference type="NCBI Taxonomy" id="426118"/>
    <lineage>
        <taxon>Archaea</taxon>
        <taxon>Thermoproteota</taxon>
        <taxon>Thermoprotei</taxon>
        <taxon>Sulfolobales</taxon>
        <taxon>Sulfolobaceae</taxon>
        <taxon>Saccharolobus</taxon>
    </lineage>
</organism>
<keyword id="KW-0238">DNA-binding</keyword>
<feature type="chain" id="PRO_1000201958" description="DNA-binding protein M164_1799">
    <location>
        <begin position="1"/>
        <end position="118"/>
    </location>
</feature>